<accession>Q04RM0</accession>
<dbReference type="EC" id="4.3.2.1" evidence="1"/>
<dbReference type="EMBL" id="CP000350">
    <property type="protein sequence ID" value="ABJ76450.1"/>
    <property type="molecule type" value="Genomic_DNA"/>
</dbReference>
<dbReference type="RefSeq" id="WP_011671865.1">
    <property type="nucleotide sequence ID" value="NC_008510.1"/>
</dbReference>
<dbReference type="SMR" id="Q04RM0"/>
<dbReference type="KEGG" id="lbj:LBJ_1932"/>
<dbReference type="HOGENOM" id="CLU_027272_2_3_12"/>
<dbReference type="UniPathway" id="UPA00068">
    <property type="reaction ID" value="UER00114"/>
</dbReference>
<dbReference type="Proteomes" id="UP000000656">
    <property type="component" value="Chromosome 1"/>
</dbReference>
<dbReference type="GO" id="GO:0005829">
    <property type="term" value="C:cytosol"/>
    <property type="evidence" value="ECO:0007669"/>
    <property type="project" value="TreeGrafter"/>
</dbReference>
<dbReference type="GO" id="GO:0004056">
    <property type="term" value="F:argininosuccinate lyase activity"/>
    <property type="evidence" value="ECO:0007669"/>
    <property type="project" value="UniProtKB-UniRule"/>
</dbReference>
<dbReference type="GO" id="GO:0042450">
    <property type="term" value="P:arginine biosynthetic process via ornithine"/>
    <property type="evidence" value="ECO:0007669"/>
    <property type="project" value="InterPro"/>
</dbReference>
<dbReference type="GO" id="GO:0006526">
    <property type="term" value="P:L-arginine biosynthetic process"/>
    <property type="evidence" value="ECO:0007669"/>
    <property type="project" value="UniProtKB-UniRule"/>
</dbReference>
<dbReference type="CDD" id="cd01359">
    <property type="entry name" value="Argininosuccinate_lyase"/>
    <property type="match status" value="1"/>
</dbReference>
<dbReference type="FunFam" id="1.10.275.10:FF:000002">
    <property type="entry name" value="Argininosuccinate lyase"/>
    <property type="match status" value="1"/>
</dbReference>
<dbReference type="FunFam" id="1.20.200.10:FF:000015">
    <property type="entry name" value="argininosuccinate lyase isoform X2"/>
    <property type="match status" value="1"/>
</dbReference>
<dbReference type="Gene3D" id="1.10.40.30">
    <property type="entry name" value="Fumarase/aspartase (C-terminal domain)"/>
    <property type="match status" value="1"/>
</dbReference>
<dbReference type="Gene3D" id="1.20.200.10">
    <property type="entry name" value="Fumarase/aspartase (Central domain)"/>
    <property type="match status" value="1"/>
</dbReference>
<dbReference type="Gene3D" id="1.10.275.10">
    <property type="entry name" value="Fumarase/aspartase (N-terminal domain)"/>
    <property type="match status" value="1"/>
</dbReference>
<dbReference type="HAMAP" id="MF_00006">
    <property type="entry name" value="Arg_succ_lyase"/>
    <property type="match status" value="1"/>
</dbReference>
<dbReference type="InterPro" id="IPR029419">
    <property type="entry name" value="Arg_succ_lyase_C"/>
</dbReference>
<dbReference type="InterPro" id="IPR009049">
    <property type="entry name" value="Argininosuccinate_lyase"/>
</dbReference>
<dbReference type="InterPro" id="IPR024083">
    <property type="entry name" value="Fumarase/histidase_N"/>
</dbReference>
<dbReference type="InterPro" id="IPR020557">
    <property type="entry name" value="Fumarate_lyase_CS"/>
</dbReference>
<dbReference type="InterPro" id="IPR000362">
    <property type="entry name" value="Fumarate_lyase_fam"/>
</dbReference>
<dbReference type="InterPro" id="IPR022761">
    <property type="entry name" value="Fumarate_lyase_N"/>
</dbReference>
<dbReference type="InterPro" id="IPR008948">
    <property type="entry name" value="L-Aspartase-like"/>
</dbReference>
<dbReference type="NCBIfam" id="TIGR00838">
    <property type="entry name" value="argH"/>
    <property type="match status" value="1"/>
</dbReference>
<dbReference type="PANTHER" id="PTHR43814">
    <property type="entry name" value="ARGININOSUCCINATE LYASE"/>
    <property type="match status" value="1"/>
</dbReference>
<dbReference type="PANTHER" id="PTHR43814:SF1">
    <property type="entry name" value="ARGININOSUCCINATE LYASE"/>
    <property type="match status" value="1"/>
</dbReference>
<dbReference type="Pfam" id="PF14698">
    <property type="entry name" value="ASL_C2"/>
    <property type="match status" value="1"/>
</dbReference>
<dbReference type="Pfam" id="PF00206">
    <property type="entry name" value="Lyase_1"/>
    <property type="match status" value="1"/>
</dbReference>
<dbReference type="PRINTS" id="PR00145">
    <property type="entry name" value="ARGSUCLYASE"/>
</dbReference>
<dbReference type="PRINTS" id="PR00149">
    <property type="entry name" value="FUMRATELYASE"/>
</dbReference>
<dbReference type="SUPFAM" id="SSF48557">
    <property type="entry name" value="L-aspartase-like"/>
    <property type="match status" value="1"/>
</dbReference>
<dbReference type="PROSITE" id="PS00163">
    <property type="entry name" value="FUMARATE_LYASES"/>
    <property type="match status" value="1"/>
</dbReference>
<proteinExistence type="inferred from homology"/>
<name>ARLY_LEPBJ</name>
<comment type="catalytic activity">
    <reaction evidence="1">
        <text>2-(N(omega)-L-arginino)succinate = fumarate + L-arginine</text>
        <dbReference type="Rhea" id="RHEA:24020"/>
        <dbReference type="ChEBI" id="CHEBI:29806"/>
        <dbReference type="ChEBI" id="CHEBI:32682"/>
        <dbReference type="ChEBI" id="CHEBI:57472"/>
        <dbReference type="EC" id="4.3.2.1"/>
    </reaction>
</comment>
<comment type="pathway">
    <text evidence="1">Amino-acid biosynthesis; L-arginine biosynthesis; L-arginine from L-ornithine and carbamoyl phosphate: step 3/3.</text>
</comment>
<comment type="subcellular location">
    <subcellularLocation>
        <location evidence="1">Cytoplasm</location>
    </subcellularLocation>
</comment>
<comment type="similarity">
    <text evidence="1">Belongs to the lyase 1 family. Argininosuccinate lyase subfamily.</text>
</comment>
<gene>
    <name evidence="1" type="primary">argH</name>
    <name type="ordered locus">LBJ_1932</name>
</gene>
<organism>
    <name type="scientific">Leptospira borgpetersenii serovar Hardjo-bovis (strain JB197)</name>
    <dbReference type="NCBI Taxonomy" id="355277"/>
    <lineage>
        <taxon>Bacteria</taxon>
        <taxon>Pseudomonadati</taxon>
        <taxon>Spirochaetota</taxon>
        <taxon>Spirochaetia</taxon>
        <taxon>Leptospirales</taxon>
        <taxon>Leptospiraceae</taxon>
        <taxon>Leptospira</taxon>
    </lineage>
</organism>
<feature type="chain" id="PRO_1000000494" description="Argininosuccinate lyase">
    <location>
        <begin position="1"/>
        <end position="470"/>
    </location>
</feature>
<evidence type="ECO:0000255" key="1">
    <source>
        <dbReference type="HAMAP-Rule" id="MF_00006"/>
    </source>
</evidence>
<keyword id="KW-0028">Amino-acid biosynthesis</keyword>
<keyword id="KW-0055">Arginine biosynthesis</keyword>
<keyword id="KW-0963">Cytoplasm</keyword>
<keyword id="KW-0456">Lyase</keyword>
<reference key="1">
    <citation type="journal article" date="2006" name="Proc. Natl. Acad. Sci. U.S.A.">
        <title>Genome reduction in Leptospira borgpetersenii reflects limited transmission potential.</title>
        <authorList>
            <person name="Bulach D.M."/>
            <person name="Zuerner R.L."/>
            <person name="Wilson P."/>
            <person name="Seemann T."/>
            <person name="McGrath A."/>
            <person name="Cullen P.A."/>
            <person name="Davis J."/>
            <person name="Johnson M."/>
            <person name="Kuczek E."/>
            <person name="Alt D.P."/>
            <person name="Peterson-Burch B."/>
            <person name="Coppel R.L."/>
            <person name="Rood J.I."/>
            <person name="Davies J.K."/>
            <person name="Adler B."/>
        </authorList>
    </citation>
    <scope>NUCLEOTIDE SEQUENCE [LARGE SCALE GENOMIC DNA]</scope>
    <source>
        <strain>JB197</strain>
    </source>
</reference>
<sequence length="470" mass="53147">MTGKEKKLWGGRFQEKPSSILERIGESVSFDHKLYKEDIQGSIAHARMLKQIGILSGDELSKIETSLSQIKTELEEGKLEFKSELEDIHMHIESRLTELIGETGKKLHTARSRNDQVTQDVRLYILGRGKEILRSIVSLRFSLYEKAKRSVDVIIPGYTHLQVAQPIRASQYLLSWFWALERDQEFFRFALKASDELALGGGAMAGVNYATDREFLKKELGLSKVSPNSMDGVSSRDHILEFLFACTQLMIHASRICEDIILYSSQEFGILKLSDSLTTGSSIMPQKKNPDIAELIRGKAGRVIGNLNHLLVMLKGLPSTYNRDLQEDKLALFDSVETVEISLEGIREMIEDWVWVPERAESSLKNGFATATDLADFLVYEKKVPFRTAHELVGTLVRVCVEQKRTLFDLPEPDRIAVSEHFVGKEYENAVSLSLSADKKISYGGTSKKRQEEQLKIALESLKQTETLFL</sequence>
<protein>
    <recommendedName>
        <fullName evidence="1">Argininosuccinate lyase</fullName>
        <shortName evidence="1">ASAL</shortName>
        <ecNumber evidence="1">4.3.2.1</ecNumber>
    </recommendedName>
    <alternativeName>
        <fullName evidence="1">Arginosuccinase</fullName>
    </alternativeName>
</protein>